<name>THIC1_METBF</name>
<proteinExistence type="inferred from homology"/>
<evidence type="ECO:0000255" key="1">
    <source>
        <dbReference type="HAMAP-Rule" id="MF_00089"/>
    </source>
</evidence>
<gene>
    <name evidence="1" type="primary">thiC1</name>
    <name type="ordered locus">Mbar_A0597</name>
</gene>
<organism>
    <name type="scientific">Methanosarcina barkeri (strain Fusaro / DSM 804)</name>
    <dbReference type="NCBI Taxonomy" id="269797"/>
    <lineage>
        <taxon>Archaea</taxon>
        <taxon>Methanobacteriati</taxon>
        <taxon>Methanobacteriota</taxon>
        <taxon>Stenosarchaea group</taxon>
        <taxon>Methanomicrobia</taxon>
        <taxon>Methanosarcinales</taxon>
        <taxon>Methanosarcinaceae</taxon>
        <taxon>Methanosarcina</taxon>
    </lineage>
</organism>
<protein>
    <recommendedName>
        <fullName evidence="1">Phosphomethylpyrimidine synthase 1</fullName>
        <ecNumber evidence="1">4.1.99.17</ecNumber>
    </recommendedName>
    <alternativeName>
        <fullName evidence="1">Hydroxymethylpyrimidine phosphate synthase 1</fullName>
        <shortName evidence="1">HMP-P synthase 1</shortName>
        <shortName evidence="1">HMP-phosphate synthase 1</shortName>
        <shortName evidence="1">HMPP synthase 1</shortName>
    </alternativeName>
    <alternativeName>
        <fullName evidence="1">Thiamine biosynthesis protein ThiC 1</fullName>
    </alternativeName>
</protein>
<accession>Q46EW5</accession>
<sequence length="428" mass="46616">MTIVEDAQKGIITEEMKIVAKDEGLDPEFIRRGVAAGRIVIPTSPYRQVKICGIGEGLRTKVNASIGVSSDIVDADMEVKKAQAAEAAGADTLMELGTGGDFLAIRKKVIDSISLSVGSVPLYQAFIEAARKYGSIVDMTEDELFKATEDQAKLGTNFMAIHTGINNITMDRLKAHGRYGGLCSRGGAFMTSWMLHNEKENPLYANFDYLVEILKEHEVVLSTGNGMRAGAVHDATDRAQIQELIINSELADRAHKQGVQVIVEGPGHVPLDQIGTNVKLMKEMSGHKPFYMLGPLVTDIAPGYDHIVTAIGASVSASYGCDFLCYVTPAEHLALPNLEDVITGVKTSKIAAHVGDMVKYPDRAREQDLAMGRARRDLDWQKMYSLAIDPEHAKEVRNSRAPEDSDACTMCGNFCALKIVNQNYNLAK</sequence>
<feature type="chain" id="PRO_0000242324" description="Phosphomethylpyrimidine synthase 1">
    <location>
        <begin position="1"/>
        <end position="428"/>
    </location>
</feature>
<feature type="binding site" evidence="1">
    <location>
        <position position="94"/>
    </location>
    <ligand>
        <name>substrate</name>
    </ligand>
</feature>
<feature type="binding site" evidence="1">
    <location>
        <position position="123"/>
    </location>
    <ligand>
        <name>substrate</name>
    </ligand>
</feature>
<feature type="binding site" evidence="1">
    <location>
        <position position="162"/>
    </location>
    <ligand>
        <name>substrate</name>
    </ligand>
</feature>
<feature type="binding site" evidence="1">
    <location>
        <begin position="184"/>
        <end position="186"/>
    </location>
    <ligand>
        <name>substrate</name>
    </ligand>
</feature>
<feature type="binding site" evidence="1">
    <location>
        <begin position="225"/>
        <end position="228"/>
    </location>
    <ligand>
        <name>substrate</name>
    </ligand>
</feature>
<feature type="binding site" evidence="1">
    <location>
        <position position="264"/>
    </location>
    <ligand>
        <name>substrate</name>
    </ligand>
</feature>
<feature type="binding site" evidence="1">
    <location>
        <position position="268"/>
    </location>
    <ligand>
        <name>Zn(2+)</name>
        <dbReference type="ChEBI" id="CHEBI:29105"/>
    </ligand>
</feature>
<feature type="binding site" evidence="1">
    <location>
        <position position="291"/>
    </location>
    <ligand>
        <name>substrate</name>
    </ligand>
</feature>
<feature type="binding site" evidence="1">
    <location>
        <position position="332"/>
    </location>
    <ligand>
        <name>Zn(2+)</name>
        <dbReference type="ChEBI" id="CHEBI:29105"/>
    </ligand>
</feature>
<feature type="binding site" evidence="1">
    <location>
        <position position="408"/>
    </location>
    <ligand>
        <name>[4Fe-4S] cluster</name>
        <dbReference type="ChEBI" id="CHEBI:49883"/>
        <note>4Fe-4S-S-AdoMet</note>
    </ligand>
</feature>
<feature type="binding site" evidence="1">
    <location>
        <position position="411"/>
    </location>
    <ligand>
        <name>[4Fe-4S] cluster</name>
        <dbReference type="ChEBI" id="CHEBI:49883"/>
        <note>4Fe-4S-S-AdoMet</note>
    </ligand>
</feature>
<feature type="binding site" evidence="1">
    <location>
        <position position="415"/>
    </location>
    <ligand>
        <name>[4Fe-4S] cluster</name>
        <dbReference type="ChEBI" id="CHEBI:49883"/>
        <note>4Fe-4S-S-AdoMet</note>
    </ligand>
</feature>
<comment type="function">
    <text evidence="1">Catalyzes the synthesis of the hydroxymethylpyrimidine phosphate (HMP-P) moiety of thiamine from aminoimidazole ribotide (AIR) in a radical S-adenosyl-L-methionine (SAM)-dependent reaction.</text>
</comment>
<comment type="catalytic activity">
    <reaction evidence="1">
        <text>5-amino-1-(5-phospho-beta-D-ribosyl)imidazole + S-adenosyl-L-methionine = 4-amino-2-methyl-5-(phosphooxymethyl)pyrimidine + CO + 5'-deoxyadenosine + formate + L-methionine + 3 H(+)</text>
        <dbReference type="Rhea" id="RHEA:24840"/>
        <dbReference type="ChEBI" id="CHEBI:15378"/>
        <dbReference type="ChEBI" id="CHEBI:15740"/>
        <dbReference type="ChEBI" id="CHEBI:17245"/>
        <dbReference type="ChEBI" id="CHEBI:17319"/>
        <dbReference type="ChEBI" id="CHEBI:57844"/>
        <dbReference type="ChEBI" id="CHEBI:58354"/>
        <dbReference type="ChEBI" id="CHEBI:59789"/>
        <dbReference type="ChEBI" id="CHEBI:137981"/>
        <dbReference type="EC" id="4.1.99.17"/>
    </reaction>
</comment>
<comment type="cofactor">
    <cofactor evidence="1">
        <name>[4Fe-4S] cluster</name>
        <dbReference type="ChEBI" id="CHEBI:49883"/>
    </cofactor>
    <text evidence="1">Binds 1 [4Fe-4S] cluster per subunit. The cluster is coordinated with 3 cysteines and an exchangeable S-adenosyl-L-methionine.</text>
</comment>
<comment type="pathway">
    <text evidence="1">Cofactor biosynthesis; thiamine diphosphate biosynthesis.</text>
</comment>
<comment type="similarity">
    <text evidence="1">Belongs to the ThiC family.</text>
</comment>
<keyword id="KW-0004">4Fe-4S</keyword>
<keyword id="KW-0408">Iron</keyword>
<keyword id="KW-0411">Iron-sulfur</keyword>
<keyword id="KW-0456">Lyase</keyword>
<keyword id="KW-0479">Metal-binding</keyword>
<keyword id="KW-0949">S-adenosyl-L-methionine</keyword>
<keyword id="KW-0784">Thiamine biosynthesis</keyword>
<keyword id="KW-0862">Zinc</keyword>
<dbReference type="EC" id="4.1.99.17" evidence="1"/>
<dbReference type="EMBL" id="CP000099">
    <property type="protein sequence ID" value="AAZ69577.1"/>
    <property type="molecule type" value="Genomic_DNA"/>
</dbReference>
<dbReference type="SMR" id="Q46EW5"/>
<dbReference type="STRING" id="269797.Mbar_A0597"/>
<dbReference type="PaxDb" id="269797-Mbar_A0597"/>
<dbReference type="KEGG" id="mba:Mbar_A0597"/>
<dbReference type="eggNOG" id="arCOG02741">
    <property type="taxonomic scope" value="Archaea"/>
</dbReference>
<dbReference type="HOGENOM" id="CLU_013181_2_2_2"/>
<dbReference type="OrthoDB" id="335406at2157"/>
<dbReference type="UniPathway" id="UPA00060"/>
<dbReference type="GO" id="GO:0051539">
    <property type="term" value="F:4 iron, 4 sulfur cluster binding"/>
    <property type="evidence" value="ECO:0007669"/>
    <property type="project" value="UniProtKB-KW"/>
</dbReference>
<dbReference type="GO" id="GO:0016830">
    <property type="term" value="F:carbon-carbon lyase activity"/>
    <property type="evidence" value="ECO:0007669"/>
    <property type="project" value="InterPro"/>
</dbReference>
<dbReference type="GO" id="GO:0008270">
    <property type="term" value="F:zinc ion binding"/>
    <property type="evidence" value="ECO:0007669"/>
    <property type="project" value="UniProtKB-UniRule"/>
</dbReference>
<dbReference type="GO" id="GO:0009228">
    <property type="term" value="P:thiamine biosynthetic process"/>
    <property type="evidence" value="ECO:0007669"/>
    <property type="project" value="UniProtKB-KW"/>
</dbReference>
<dbReference type="GO" id="GO:0009229">
    <property type="term" value="P:thiamine diphosphate biosynthetic process"/>
    <property type="evidence" value="ECO:0007669"/>
    <property type="project" value="UniProtKB-UniRule"/>
</dbReference>
<dbReference type="Gene3D" id="6.10.250.620">
    <property type="match status" value="1"/>
</dbReference>
<dbReference type="Gene3D" id="3.20.20.540">
    <property type="entry name" value="Radical SAM ThiC family, central domain"/>
    <property type="match status" value="1"/>
</dbReference>
<dbReference type="HAMAP" id="MF_00089">
    <property type="entry name" value="ThiC"/>
    <property type="match status" value="1"/>
</dbReference>
<dbReference type="InterPro" id="IPR037509">
    <property type="entry name" value="ThiC"/>
</dbReference>
<dbReference type="InterPro" id="IPR038521">
    <property type="entry name" value="ThiC/Bza_core_dom"/>
</dbReference>
<dbReference type="InterPro" id="IPR002817">
    <property type="entry name" value="ThiC/BzaA/B"/>
</dbReference>
<dbReference type="NCBIfam" id="NF009895">
    <property type="entry name" value="PRK13352.1"/>
    <property type="match status" value="1"/>
</dbReference>
<dbReference type="NCBIfam" id="TIGR00190">
    <property type="entry name" value="thiC"/>
    <property type="match status" value="1"/>
</dbReference>
<dbReference type="PANTHER" id="PTHR30557:SF1">
    <property type="entry name" value="PHOSPHOMETHYLPYRIMIDINE SYNTHASE, CHLOROPLASTIC"/>
    <property type="match status" value="1"/>
</dbReference>
<dbReference type="PANTHER" id="PTHR30557">
    <property type="entry name" value="THIAMINE BIOSYNTHESIS PROTEIN THIC"/>
    <property type="match status" value="1"/>
</dbReference>
<dbReference type="Pfam" id="PF01964">
    <property type="entry name" value="ThiC_Rad_SAM"/>
    <property type="match status" value="1"/>
</dbReference>
<dbReference type="SFLD" id="SFLDF00407">
    <property type="entry name" value="phosphomethylpyrimidine_syntha"/>
    <property type="match status" value="1"/>
</dbReference>
<dbReference type="SFLD" id="SFLDG01114">
    <property type="entry name" value="phosphomethylpyrimidine_syntha"/>
    <property type="match status" value="1"/>
</dbReference>
<dbReference type="SFLD" id="SFLDS00113">
    <property type="entry name" value="Radical_SAM_Phosphomethylpyrim"/>
    <property type="match status" value="1"/>
</dbReference>
<reference key="1">
    <citation type="journal article" date="2006" name="J. Bacteriol.">
        <title>The Methanosarcina barkeri genome: comparative analysis with Methanosarcina acetivorans and Methanosarcina mazei reveals extensive rearrangement within methanosarcinal genomes.</title>
        <authorList>
            <person name="Maeder D.L."/>
            <person name="Anderson I."/>
            <person name="Brettin T.S."/>
            <person name="Bruce D.C."/>
            <person name="Gilna P."/>
            <person name="Han C.S."/>
            <person name="Lapidus A."/>
            <person name="Metcalf W.W."/>
            <person name="Saunders E."/>
            <person name="Tapia R."/>
            <person name="Sowers K.R."/>
        </authorList>
    </citation>
    <scope>NUCLEOTIDE SEQUENCE [LARGE SCALE GENOMIC DNA]</scope>
    <source>
        <strain>Fusaro / DSM 804</strain>
    </source>
</reference>